<keyword id="KW-0002">3D-structure</keyword>
<keyword id="KW-0050">Antiport</keyword>
<keyword id="KW-0997">Cell inner membrane</keyword>
<keyword id="KW-1003">Cell membrane</keyword>
<keyword id="KW-0472">Membrane</keyword>
<keyword id="KW-1185">Reference proteome</keyword>
<keyword id="KW-0812">Transmembrane</keyword>
<keyword id="KW-1133">Transmembrane helix</keyword>
<keyword id="KW-0813">Transport</keyword>
<evidence type="ECO:0000269" key="1">
    <source>
    </source>
</evidence>
<evidence type="ECO:0000269" key="2">
    <source>
    </source>
</evidence>
<evidence type="ECO:0000269" key="3">
    <source>
    </source>
</evidence>
<evidence type="ECO:0000269" key="4">
    <source>
    </source>
</evidence>
<evidence type="ECO:0000269" key="5">
    <source>
    </source>
</evidence>
<evidence type="ECO:0000269" key="6">
    <source>
    </source>
</evidence>
<evidence type="ECO:0000269" key="7">
    <source>
    </source>
</evidence>
<evidence type="ECO:0000269" key="8">
    <source>
    </source>
</evidence>
<evidence type="ECO:0000269" key="9">
    <source>
    </source>
</evidence>
<evidence type="ECO:0000269" key="10">
    <source>
    </source>
</evidence>
<evidence type="ECO:0000269" key="11">
    <source>
    </source>
</evidence>
<evidence type="ECO:0000269" key="12">
    <source>
    </source>
</evidence>
<evidence type="ECO:0000269" key="13">
    <source>
    </source>
</evidence>
<evidence type="ECO:0000269" key="14">
    <source>
    </source>
</evidence>
<evidence type="ECO:0000269" key="15">
    <source>
    </source>
</evidence>
<evidence type="ECO:0000269" key="16">
    <source>
    </source>
</evidence>
<evidence type="ECO:0000269" key="17">
    <source>
    </source>
</evidence>
<evidence type="ECO:0000269" key="18">
    <source>
    </source>
</evidence>
<evidence type="ECO:0000269" key="19">
    <source>
    </source>
</evidence>
<evidence type="ECO:0000269" key="20">
    <source>
    </source>
</evidence>
<evidence type="ECO:0000269" key="21">
    <source>
    </source>
</evidence>
<evidence type="ECO:0000269" key="22">
    <source>
    </source>
</evidence>
<evidence type="ECO:0000269" key="23">
    <source>
    </source>
</evidence>
<evidence type="ECO:0000269" key="24">
    <source>
    </source>
</evidence>
<evidence type="ECO:0000269" key="25">
    <source>
    </source>
</evidence>
<evidence type="ECO:0000269" key="26">
    <source>
    </source>
</evidence>
<evidence type="ECO:0000269" key="27">
    <source>
    </source>
</evidence>
<evidence type="ECO:0000305" key="28"/>
<evidence type="ECO:0000305" key="29">
    <source>
    </source>
</evidence>
<evidence type="ECO:0000305" key="30">
    <source>
    </source>
</evidence>
<evidence type="ECO:0000305" key="31">
    <source>
    </source>
</evidence>
<evidence type="ECO:0000305" key="32">
    <source>
    </source>
</evidence>
<evidence type="ECO:0000305" key="33">
    <source>
    </source>
</evidence>
<evidence type="ECO:0000305" key="34">
    <source>
    </source>
</evidence>
<evidence type="ECO:0007744" key="35">
    <source>
        <dbReference type="PDB" id="2I68"/>
    </source>
</evidence>
<evidence type="ECO:0007744" key="36">
    <source>
        <dbReference type="PDB" id="3B5D"/>
    </source>
</evidence>
<evidence type="ECO:0007744" key="37">
    <source>
        <dbReference type="PDB" id="3B61"/>
    </source>
</evidence>
<evidence type="ECO:0007744" key="38">
    <source>
        <dbReference type="PDB" id="3B62"/>
    </source>
</evidence>
<evidence type="ECO:0007829" key="39">
    <source>
        <dbReference type="PDB" id="7MH6"/>
    </source>
</evidence>
<organism>
    <name type="scientific">Escherichia coli (strain K12)</name>
    <dbReference type="NCBI Taxonomy" id="83333"/>
    <lineage>
        <taxon>Bacteria</taxon>
        <taxon>Pseudomonadati</taxon>
        <taxon>Pseudomonadota</taxon>
        <taxon>Gammaproteobacteria</taxon>
        <taxon>Enterobacterales</taxon>
        <taxon>Enterobacteriaceae</taxon>
        <taxon>Escherichia</taxon>
    </lineage>
</organism>
<sequence>MNPYIYLGGAILAEVIGTTLMKFSEGFTRLWPSVGTIICYCASFWLLAQTLAYIPTGIAYAIWSGVGIVLISLLSWGFFGQRLDLPAIIGMMLICAGVLIINLLSRSTPH</sequence>
<proteinExistence type="evidence at protein level"/>
<comment type="function">
    <text evidence="1 2 8 13 14 19 20 22 23 24 25 26">Multidrug efflux protein that confers resistance to a wide range of toxic compounds, including ethidium, methyl viologen, acriflavine, tetraphenylphosphonium (TPP(+)), benzalkonium, propidium, dequalinium and the aminoglycoside antibiotics streptomycin and tobramycin (PubMed:10681497, PubMed:11574548, PubMed:15371426, PubMed:18024586, PubMed:18295794, PubMed:23042996, PubMed:24448799, PubMed:7896833, PubMed:9050242). Can also transport the osmoprotectants betaine and choline (PubMed:22942246). The drug efflux is coupled to an influx of protons (PubMed:15371426, PubMed:29114048, PubMed:7896833). Can couple antiport of a drug to either one or two protons, performing both electrogenic and electroneutral transport of a single substrate (PubMed:29114048). Simultaneously binds and cotransports proton and drug (PubMed:29114048, PubMed:30287687).</text>
</comment>
<comment type="activity regulation">
    <text evidence="22">Substrate identity influences both the ground-state and transition-state energies for the conformational exchange process, emphasizing the coupling between substrate binding and transport.</text>
</comment>
<comment type="biophysicochemical properties">
    <kinetics>
        <KM evidence="25">247 uM for methyl viologen</KM>
        <Vmax evidence="25">1572.0 nmol/min/mg enzyme with methyl viologen as substrate</Vmax>
    </kinetics>
    <phDependence>
        <text evidence="1">Optimum pH is 8-8.5. Transport activity occurs from pH 7.5 to 9.</text>
    </phDependence>
</comment>
<comment type="subunit">
    <text evidence="4 5 7 9 11 12 13 17 18 21">Homodimer (PubMed:14633977, PubMed:14755055, PubMed:15111102, PubMed:15882076, PubMed:17003034, PubMed:18024586, PubMed:20551331, PubMed:22178925, PubMed:23920359). Forms an antiparallel dimeric structure (PubMed:17005200, PubMed:18024586, PubMed:20551331, PubMed:22178925, PubMed:23920359). Also forms dimers of homodimers (PubMed:14755055).</text>
</comment>
<comment type="interaction">
    <interactant intactId="EBI-8789431">
        <id>P23895</id>
    </interactant>
    <interactant intactId="EBI-8789431">
        <id>P23895</id>
        <label>emrE</label>
    </interactant>
    <organismsDiffer>false</organismsDiffer>
    <experiments>2</experiments>
</comment>
<comment type="subcellular location">
    <subcellularLocation>
        <location evidence="6 27">Cell inner membrane</location>
        <topology evidence="6 12 27">Multi-pass membrane protein</topology>
    </subcellularLocation>
    <text evidence="12 13 16 17 18 21">Forms antiparallel homodimers (PubMed:17005200, PubMed:18024586, PubMed:20508091, PubMed:20551331, PubMed:22178925, PubMed:23920359). The topology could be controlled by a single positively charged residue placed in different locations throughout the protein, including the very C terminus (PubMed:20508091).</text>
</comment>
<comment type="domain">
    <text evidence="14 17 18 22 24">Binds different substrates in the same active site (PubMed:18295794, PubMed:22178925). Binding of the substrate induces conformational changes of EmrE (PubMed:18295794, PubMed:20551331, PubMed:22178925). The asymmetric antiparallel homodimer exchanges between inward- and outward-facing states that are identical except that they have opposite orientation in the membrane (PubMed:22178925, PubMed:24448799). The conserved C-terminal tail is strongly coupled to EmrE's drug-binding domain and participates in secondary gating of EmrE-mediated proton/drug transport, occluding the binding pocket of fully protonated EmrE in the absence of drug to prevent dissipative proton transport (PubMed:30287687).</text>
</comment>
<comment type="miscellaneous">
    <text evidence="15">Mutants designed to insert with biased topology are functional regardless of the topology.</text>
</comment>
<comment type="miscellaneous">
    <text>Encoded by the cryptic lambdoid prophage DLP12.</text>
</comment>
<comment type="similarity">
    <text evidence="28">Belongs to the drug/metabolite transporter (DMT) superfamily. Small multidrug resistance (SMR) (TC 2.A.7.1) family.</text>
</comment>
<comment type="caution">
    <text evidence="28 30 31">The membrane insertion topology of the two monomers was controversial and some studies originally suggested a parallel arrangement of the two monomers in the EmrE dimer. The antiparallel dimeric structure is now the generally accepted functional topology.</text>
</comment>
<gene>
    <name type="primary">emrE</name>
    <name type="synonym">eb</name>
    <name type="synonym">mvrC</name>
    <name type="ordered locus">b0543</name>
    <name type="ordered locus">JW0531</name>
</gene>
<feature type="chain" id="PRO_0000108074" description="Multidrug transporter EmrE">
    <location>
        <begin position="1"/>
        <end position="110"/>
    </location>
</feature>
<feature type="transmembrane region" description="Helical; Name=1" evidence="32">
    <location>
        <begin position="4"/>
        <end position="21"/>
    </location>
</feature>
<feature type="transmembrane region" description="Helical; Name=2" evidence="32">
    <location>
        <begin position="34"/>
        <end position="52"/>
    </location>
</feature>
<feature type="transmembrane region" description="Helical; Name=3" evidence="32">
    <location>
        <begin position="58"/>
        <end position="80"/>
    </location>
</feature>
<feature type="transmembrane region" description="Helical; Name=4" evidence="32">
    <location>
        <begin position="87"/>
        <end position="104"/>
    </location>
</feature>
<feature type="site" description="Required for proper coupling between the substrate transport and the proton gradient">
    <location>
        <position position="4"/>
    </location>
</feature>
<feature type="site" description="Essential for translocation and for substrate and proton binding" evidence="29 33">
    <location>
        <position position="14"/>
    </location>
</feature>
<feature type="site" description="Involved in substrate binding">
    <location>
        <position position="40"/>
    </location>
</feature>
<feature type="site" description="Involved in substrate binding">
    <location>
        <position position="60"/>
    </location>
</feature>
<feature type="site" description="Involved in substrate binding">
    <location>
        <position position="63"/>
    </location>
</feature>
<feature type="site" description="Important for activity" evidence="34">
    <location>
        <position position="110"/>
    </location>
</feature>
<feature type="mutagenesis site" description="Still binds substrate. No transport activity in the presence of a proton gradient, but still transports substrate in the absence of a proton gradient. Resistance to toxicants is abolished." evidence="10">
    <original>Y</original>
    <variation>C</variation>
    <location>
        <position position="4"/>
    </location>
</feature>
<feature type="mutagenesis site" description="No effect on resistance to toxicants." evidence="10">
    <original>Y</original>
    <variation>F</variation>
    <variation>W</variation>
    <location>
        <position position="4"/>
    </location>
</feature>
<feature type="mutagenesis site" description="No effect on resistance to toxicants." evidence="10">
    <original>Y</original>
    <variation>C</variation>
    <variation>F</variation>
    <variation>L</variation>
    <location>
        <position position="6"/>
    </location>
</feature>
<feature type="mutagenesis site" description="No substrate binding. Resistance to toxicants is abolished." evidence="3">
    <original>L</original>
    <variation>C</variation>
    <location>
        <position position="7"/>
    </location>
</feature>
<feature type="mutagenesis site" description="Still binds substrate, with lower affinity. Resistance to toxicants is abolished." evidence="3">
    <original>A</original>
    <variation>C</variation>
    <location>
        <position position="10"/>
    </location>
</feature>
<feature type="mutagenesis site" description="Still binds substrate, with lower affinity. Resistance to toxicants is abolished." evidence="3">
    <original>I</original>
    <variation>C</variation>
    <location>
        <position position="11"/>
    </location>
</feature>
<feature type="mutagenesis site" description="No substrate binding. No transport activity. Resistance to toxicants is abolished." evidence="1 3">
    <original>E</original>
    <variation>C</variation>
    <location>
        <position position="14"/>
    </location>
</feature>
<feature type="mutagenesis site" description="Still binds substrate. No transport activity in the presence of a proton gradient, but still transports substrate in the absence of a proton gradient. Resistance to toxicants is abolished." evidence="1 3">
    <original>E</original>
    <variation>D</variation>
    <location>
        <position position="14"/>
    </location>
</feature>
<feature type="mutagenesis site" description="No substrate binding. Resistance to toxicants is abolished." evidence="3">
    <original>G</original>
    <variation>C</variation>
    <location>
        <position position="17"/>
    </location>
</feature>
<feature type="mutagenesis site" description="Still binds substrate, with lower affinity. Resistance to toxicants is abolished." evidence="3">
    <original>T</original>
    <variation>C</variation>
    <location>
        <position position="18"/>
    </location>
</feature>
<feature type="mutagenesis site" description="Modifies substrate specificity." evidence="10">
    <original>Y</original>
    <variation>C</variation>
    <variation>F</variation>
    <variation>L</variation>
    <variation>M</variation>
    <variation>S</variation>
    <variation>T</variation>
    <variation>V</variation>
    <location>
        <position position="40"/>
    </location>
</feature>
<feature type="mutagenesis site" description="No effect on resistance to toxicants." evidence="10">
    <original>Y</original>
    <variation>C</variation>
    <location>
        <position position="53"/>
    </location>
</feature>
<feature type="mutagenesis site" description="Still binds substrate, with lower affinity. Resistance to toxicants is abolished." evidence="10">
    <original>Y</original>
    <variation>C</variation>
    <variation>F</variation>
    <location>
        <position position="60"/>
    </location>
</feature>
<feature type="mutagenesis site" description="No transport activity. Resistance to toxicants is abolished." evidence="9">
    <original>W</original>
    <variation>C</variation>
    <variation>Y</variation>
    <location>
        <position position="63"/>
    </location>
</feature>
<feature type="mutagenesis site" description="Still binds substrate, with two-fold reduction in substrate affinity. Resistance to toxicants is abolished." evidence="9">
    <original>W</original>
    <variation>F</variation>
    <location>
        <position position="63"/>
    </location>
</feature>
<feature type="mutagenesis site" description="Major destabilizing effect on the dimer form." evidence="21">
    <original>G</original>
    <variation>W</variation>
    <location>
        <position position="67"/>
    </location>
</feature>
<feature type="helix" evidence="39">
    <location>
        <begin position="3"/>
        <end position="23"/>
    </location>
</feature>
<feature type="strand" evidence="39">
    <location>
        <begin position="24"/>
        <end position="27"/>
    </location>
</feature>
<feature type="helix" evidence="39">
    <location>
        <begin position="30"/>
        <end position="50"/>
    </location>
</feature>
<feature type="turn" evidence="39">
    <location>
        <begin position="51"/>
        <end position="53"/>
    </location>
</feature>
<feature type="helix" evidence="39">
    <location>
        <begin position="56"/>
        <end position="78"/>
    </location>
</feature>
<feature type="helix" evidence="39">
    <location>
        <begin position="88"/>
        <end position="99"/>
    </location>
</feature>
<accession>P23895</accession>
<accession>Q2MBN8</accession>
<protein>
    <recommendedName>
        <fullName>Multidrug transporter EmrE</fullName>
    </recommendedName>
    <alternativeName>
        <fullName>Efflux-multidrug resistance protein EmrE</fullName>
    </alternativeName>
    <alternativeName>
        <fullName>Ethidium resistance protein</fullName>
    </alternativeName>
    <alternativeName>
        <fullName>Methyl viologen resistance protein C</fullName>
    </alternativeName>
</protein>
<reference key="1">
    <citation type="journal article" date="1991" name="FEMS Microbiol. Lett.">
        <title>Nucleotide sequence of the ethidium efflux gene from Escherichia coli.</title>
        <authorList>
            <person name="Purewal A.S."/>
        </authorList>
    </citation>
    <scope>NUCLEOTIDE SEQUENCE [GENOMIC DNA]</scope>
</reference>
<reference key="2">
    <citation type="journal article" date="1992" name="Nucleic Acids Res.">
        <title>Cloning and characterization of the mvrC gene of Escherichia coli K-12 which confers resistance against methyl viologen toxicity.</title>
        <authorList>
            <person name="Morimyo M."/>
            <person name="Hongo E."/>
            <person name="Hama-Inaba H."/>
            <person name="Machida I."/>
        </authorList>
    </citation>
    <scope>NUCLEOTIDE SEQUENCE [GENOMIC DNA]</scope>
</reference>
<reference key="3">
    <citation type="submission" date="1997-01" db="EMBL/GenBank/DDBJ databases">
        <title>Sequence of minutes 4-25 of Escherichia coli.</title>
        <authorList>
            <person name="Chung E."/>
            <person name="Allen E."/>
            <person name="Araujo R."/>
            <person name="Aparicio A.M."/>
            <person name="Davis K."/>
            <person name="Duncan M."/>
            <person name="Federspiel N."/>
            <person name="Hyman R."/>
            <person name="Kalman S."/>
            <person name="Komp C."/>
            <person name="Kurdi O."/>
            <person name="Lew H."/>
            <person name="Lin D."/>
            <person name="Namath A."/>
            <person name="Oefner P."/>
            <person name="Roberts D."/>
            <person name="Schramm S."/>
            <person name="Davis R.W."/>
        </authorList>
    </citation>
    <scope>NUCLEOTIDE SEQUENCE [LARGE SCALE GENOMIC DNA]</scope>
    <source>
        <strain>K12 / MG1655 / ATCC 47076</strain>
    </source>
</reference>
<reference key="4">
    <citation type="journal article" date="1997" name="Science">
        <title>The complete genome sequence of Escherichia coli K-12.</title>
        <authorList>
            <person name="Blattner F.R."/>
            <person name="Plunkett G. III"/>
            <person name="Bloch C.A."/>
            <person name="Perna N.T."/>
            <person name="Burland V."/>
            <person name="Riley M."/>
            <person name="Collado-Vides J."/>
            <person name="Glasner J.D."/>
            <person name="Rode C.K."/>
            <person name="Mayhew G.F."/>
            <person name="Gregor J."/>
            <person name="Davis N.W."/>
            <person name="Kirkpatrick H.A."/>
            <person name="Goeden M.A."/>
            <person name="Rose D.J."/>
            <person name="Mau B."/>
            <person name="Shao Y."/>
        </authorList>
    </citation>
    <scope>NUCLEOTIDE SEQUENCE [LARGE SCALE GENOMIC DNA]</scope>
    <source>
        <strain>K12 / MG1655 / ATCC 47076</strain>
    </source>
</reference>
<reference key="5">
    <citation type="journal article" date="2006" name="Mol. Syst. Biol.">
        <title>Highly accurate genome sequences of Escherichia coli K-12 strains MG1655 and W3110.</title>
        <authorList>
            <person name="Hayashi K."/>
            <person name="Morooka N."/>
            <person name="Yamamoto Y."/>
            <person name="Fujita K."/>
            <person name="Isono K."/>
            <person name="Choi S."/>
            <person name="Ohtsubo E."/>
            <person name="Baba T."/>
            <person name="Wanner B.L."/>
            <person name="Mori H."/>
            <person name="Horiuchi T."/>
        </authorList>
    </citation>
    <scope>NUCLEOTIDE SEQUENCE [LARGE SCALE GENOMIC DNA]</scope>
    <source>
        <strain>K12 / W3110 / ATCC 27325 / DSM 5911</strain>
    </source>
</reference>
<reference key="6">
    <citation type="journal article" date="1995" name="J. Biol. Chem.">
        <title>EmrE, an Escherichia coli 12-kDa multidrug transporter, exchanges toxic cations and H+ and is soluble in organic solvents.</title>
        <authorList>
            <person name="Yerushalmi H."/>
            <person name="Lebendiker M."/>
            <person name="Schuldiner S."/>
        </authorList>
    </citation>
    <scope>FUNCTION</scope>
    <scope>KINETIC PARAMETERS</scope>
    <source>
        <strain>K12 / JM109 / ATCC 53323</strain>
    </source>
</reference>
<reference key="7">
    <citation type="journal article" date="1997" name="J. Exp. Biol.">
        <title>EmrE, the smallest ion-coupled transporter, provides a unique paradigm for structure-function studies.</title>
        <authorList>
            <person name="Schuldiner S."/>
            <person name="Lebendiker M."/>
            <person name="Yerushalmi H."/>
        </authorList>
    </citation>
    <scope>FUNCTION</scope>
    <scope>REVIEW</scope>
</reference>
<reference key="8">
    <citation type="journal article" date="2000" name="J. Biol. Chem.">
        <title>An essential glutamyl residue in EmrE, a multidrug antiporter from Escherichia coli.</title>
        <authorList>
            <person name="Yerushalmi H."/>
            <person name="Schuldiner S."/>
        </authorList>
    </citation>
    <scope>FUNCTION</scope>
    <scope>PH DEPENDENCE</scope>
    <scope>MUTAGENESIS OF GLU-14</scope>
    <source>
        <strain>K12 / JM109 / ATCC 53323</strain>
    </source>
</reference>
<reference key="9">
    <citation type="journal article" date="2001" name="J. Biol. Chem.">
        <title>Functional analysis of novel multidrug transporters from human pathogens.</title>
        <authorList>
            <person name="Ninio S."/>
            <person name="Rotem D."/>
            <person name="Schuldiner S."/>
        </authorList>
    </citation>
    <scope>FUNCTION</scope>
</reference>
<reference key="10">
    <citation type="journal article" date="2001" name="News Physiol. Sci.">
        <title>Small is mighty: EmrE, a multidrug transporter as an experimental paradigm.</title>
        <authorList>
            <person name="Schuldiner S."/>
            <person name="Granot D."/>
            <person name="Mordoch S.S."/>
            <person name="Ninio S."/>
            <person name="Rotem D."/>
            <person name="Soskin M."/>
            <person name="Tate C.G."/>
            <person name="Yerushalmi H."/>
        </authorList>
    </citation>
    <scope>REVIEW</scope>
</reference>
<reference key="11">
    <citation type="journal article" date="2003" name="J. Biol. Chem.">
        <title>An amino acid cluster around the essential Glu-14 is part of the substrate- and proton-binding domain of EmrE, a multidrug transporter from Escherichia coli.</title>
        <authorList>
            <person name="Gutman N."/>
            <person name="Steiner-Mordoch S."/>
            <person name="Schuldiner S."/>
        </authorList>
    </citation>
    <scope>MUTAGENESIS OF LEU-7; ALA-10; ILE-11; GLU-14; GLY-17 AND THR-18</scope>
</reference>
<reference key="12">
    <citation type="journal article" date="2004" name="FEBS Lett.">
        <title>The membrane topology of EmrE - a small multidrug transporter from Escherichia coli.</title>
        <authorList>
            <person name="Ninio S."/>
            <person name="Elbaz Y."/>
            <person name="Schuldiner S."/>
        </authorList>
    </citation>
    <scope>SUBCELLULAR LOCATION</scope>
    <scope>TOPOLOGY</scope>
</reference>
<reference key="13">
    <citation type="journal article" date="2004" name="FEBS Lett.">
        <title>New insights into the structure and oligomeric state of the bacterial multidrug transporter EmrE: an unusual asymmetric homo-dimer.</title>
        <authorList>
            <person name="Ubarretxena-Belandia I."/>
            <person name="Tate C.G."/>
        </authorList>
    </citation>
    <scope>SUBUNIT</scope>
</reference>
<reference key="14">
    <citation type="journal article" date="2004" name="J. Biol. Chem.">
        <title>EmrE, a multidrug transporter from Escherichia coli, transports monovalent and divalent substrates with the same stoichiometry.</title>
        <authorList>
            <person name="Rotem D."/>
            <person name="Schuldiner S."/>
        </authorList>
    </citation>
    <scope>FUNCTION</scope>
</reference>
<reference key="15">
    <citation type="journal article" date="2004" name="Proc. Natl. Acad. Sci. U.S.A.">
        <title>In vitro synthesis of fully functional EmrE, a multidrug transporter, and study of its oligomeric state.</title>
        <authorList>
            <person name="Elbaz Y."/>
            <person name="Steiner-Mordoch S."/>
            <person name="Danieli T."/>
            <person name="Schuldiner S."/>
        </authorList>
    </citation>
    <scope>SUBUNIT</scope>
</reference>
<reference key="16">
    <citation type="journal article" date="2005" name="Biochemistry">
        <title>Substrate-induced tryptophan fluorescence changes in EmrE, the smallest ion-coupled multidrug transporter.</title>
        <authorList>
            <person name="Elbaz Y."/>
            <person name="Tayer N."/>
            <person name="Steinfels E."/>
            <person name="Steiner-Mordoch S."/>
            <person name="Schuldiner S."/>
        </authorList>
    </citation>
    <scope>MUTAGENESIS OF TRP-63</scope>
    <scope>SUBUNIT</scope>
</reference>
<reference key="17">
    <citation type="journal article" date="2005" name="J. Biol. Chem.">
        <title>Exploring the binding domain of EmrE, the smallest multidrug transporter.</title>
        <authorList>
            <person name="Sharoni M."/>
            <person name="Steiner-Mordoch S."/>
            <person name="Schuldiner S."/>
        </authorList>
    </citation>
    <scope>SUBSTRATE-BINDING CAVITY</scope>
</reference>
<reference key="18">
    <citation type="journal article" date="2005" name="Science">
        <title>Global topology analysis of the Escherichia coli inner membrane proteome.</title>
        <authorList>
            <person name="Daley D.O."/>
            <person name="Rapp M."/>
            <person name="Granseth E."/>
            <person name="Melen K."/>
            <person name="Drew D."/>
            <person name="von Heijne G."/>
        </authorList>
    </citation>
    <scope>TOPOLOGY [LARGE SCALE ANALYSIS]</scope>
    <source>
        <strain>K12 / MG1655 / ATCC 47076</strain>
    </source>
</reference>
<reference key="19">
    <citation type="journal article" date="2006" name="J. Biol. Chem.">
        <title>Identification of tyrosine residues critical for the function of an ion-coupled multidrug transporter.</title>
        <authorList>
            <person name="Rotem D."/>
            <person name="Steiner-Mordoch S."/>
            <person name="Schuldiner S."/>
        </authorList>
    </citation>
    <scope>MUTAGENESIS OF TYR-4; TYR-6; TYR-40; TYR-53 AND TYR-60</scope>
</reference>
<reference key="20">
    <citation type="journal article" date="2006" name="J. Biol. Chem.">
        <title>On parallel and antiparallel topology of a homodimeric multidrug transporter.</title>
        <authorList>
            <person name="Soskine M."/>
            <person name="Mark S."/>
            <person name="Tayer N."/>
            <person name="Mizrachi R."/>
            <person name="Schuldiner S."/>
        </authorList>
    </citation>
    <scope>SUBUNIT</scope>
</reference>
<reference key="21">
    <citation type="journal article" date="2010" name="J. Biol. Chem.">
        <title>Topologically random insertion of EmrE supports a pathway for evolution of inverted repeats in ion-coupled transporters.</title>
        <authorList>
            <person name="Nasie I."/>
            <person name="Steiner-Mordoch S."/>
            <person name="Gold A."/>
            <person name="Schuldiner S."/>
        </authorList>
    </citation>
    <scope>TOPOLOGY OF MUTANT</scope>
</reference>
<reference key="22">
    <citation type="journal article" date="2010" name="J. Biol. Chem.">
        <title>Structure, dynamics, and substrate-induced conformational changes of the multidrug transporter EmrE in liposomes.</title>
        <authorList>
            <person name="Amadi S.T."/>
            <person name="Koteiche H.A."/>
            <person name="Mishra S."/>
            <person name="McHaourab H.S."/>
        </authorList>
    </citation>
    <scope>SUBUNIT</scope>
    <scope>SUBCELLULAR LOCATION</scope>
    <scope>DOMAIN</scope>
</reference>
<reference key="23">
    <citation type="journal article" date="2010" name="Science">
        <title>Control of membrane protein topology by a single C-terminal residue.</title>
        <authorList>
            <person name="Seppaelae S."/>
            <person name="Slusky J.S."/>
            <person name="Lloris-Garcera P."/>
            <person name="Rapp M."/>
            <person name="von Heijne G."/>
        </authorList>
    </citation>
    <scope>SUBCELLULAR LOCATION</scope>
</reference>
<reference key="24">
    <citation type="journal article" date="2011" name="Nature">
        <title>Antiparallel EmrE exports drugs by exchanging between asymmetric structures.</title>
        <authorList>
            <person name="Morrison E.A."/>
            <person name="DeKoster G.T."/>
            <person name="Dutta S."/>
            <person name="Vafabakhsh R."/>
            <person name="Clarkson M.W."/>
            <person name="Bahl A."/>
            <person name="Kern D."/>
            <person name="Ha T."/>
            <person name="Henzler-Wildman K.A."/>
        </authorList>
    </citation>
    <scope>SUBUNIT</scope>
    <scope>SUBCELLULAR LOCATION</scope>
    <scope>DOMAIN</scope>
</reference>
<reference key="25">
    <citation type="journal article" date="2012" name="Curr. Opin. Struct. Biol.">
        <title>Analyzing conformational changes in the transport cycle of EmrE.</title>
        <authorList>
            <person name="Henzler-Wildman K."/>
        </authorList>
    </citation>
    <scope>REVIEW</scope>
</reference>
<reference key="26">
    <citation type="journal article" date="2012" name="J. Bacteriol.">
        <title>Small multidrug resistance protein EmrE reduces host pH and osmotic tolerance to metabolic quaternary cation osmoprotectants.</title>
        <authorList>
            <person name="Bay D.C."/>
            <person name="Turner R.J."/>
        </authorList>
    </citation>
    <scope>FUNCTION</scope>
</reference>
<reference key="27">
    <citation type="journal article" date="2012" name="J. Bacteriol.">
        <title>New substrates on the block: clinically relevant resistances for EmrE and homologues.</title>
        <authorList>
            <person name="Nasie I."/>
            <person name="Steiner-Mordoch S."/>
            <person name="Schuldiner S."/>
        </authorList>
    </citation>
    <scope>FUNCTION</scope>
</reference>
<reference key="28">
    <citation type="journal article" date="2013" name="J. Mol. Biol.">
        <title>In vivo trp scanning of the small multidrug resistance protein EmrE confirms 3D structure models'.</title>
        <authorList>
            <person name="Lloris-Garcera P."/>
            <person name="Slusky J.S."/>
            <person name="Seppaelae S."/>
            <person name="Priess M."/>
            <person name="Schaefer L.V."/>
            <person name="von Heijne G."/>
        </authorList>
    </citation>
    <scope>SUBUNIT</scope>
    <scope>SUBCELLULAR LOCATION</scope>
    <scope>MUTAGENESIS OF GLY-67</scope>
</reference>
<reference key="29">
    <citation type="journal article" date="2014" name="J. Biol. Chem.">
        <title>Transported substrate determines exchange rate in the multidrug resistance transporter EmrE.</title>
        <authorList>
            <person name="Morrison E.A."/>
            <person name="Henzler-Wildman K.A."/>
        </authorList>
    </citation>
    <scope>FUNCTION</scope>
    <scope>ACTIVITY REGULATION</scope>
    <scope>DOMAIN</scope>
</reference>
<reference key="30">
    <citation type="journal article" date="2017" name="Proc. Natl. Acad. Sci. U.S.A.">
        <title>New free-exchange model of EmrE transport.</title>
        <authorList>
            <person name="Robinson A.E."/>
            <person name="Thomas N.E."/>
            <person name="Morrison E.A."/>
            <person name="Balthazor B.M."/>
            <person name="Henzler-Wildman K.A."/>
        </authorList>
    </citation>
    <scope>FUNCTION</scope>
</reference>
<reference key="31">
    <citation type="journal article" date="2018" name="J. Biol. Chem.">
        <title>The C terminus of the bacterial multidrug transporter EmrE couples drug binding to proton release.</title>
        <authorList>
            <person name="Thomas N.E."/>
            <person name="Wu C."/>
            <person name="Morrison E.A."/>
            <person name="Robinson A.E."/>
            <person name="Werner J.P."/>
            <person name="Henzler-Wildman K.A."/>
        </authorList>
    </citation>
    <scope>FUNCTION</scope>
    <scope>DOMAIN</scope>
</reference>
<reference key="32">
    <citation type="journal article" date="1998" name="Eur. J. Biochem.">
        <title>NMR investigation of the multidrug transporter EmrE, an integral membrane protein.</title>
        <authorList>
            <person name="Schwaiger M."/>
            <person name="Lebendiker M."/>
            <person name="Yerushalmi H."/>
            <person name="Coles M."/>
            <person name="Groeger A."/>
            <person name="Schwarz C."/>
            <person name="Schuldiner S."/>
            <person name="Kessler H."/>
        </authorList>
    </citation>
    <scope>STRUCTURE BY NMR</scope>
    <scope>SUBCELLULAR LOCATION</scope>
</reference>
<reference key="33">
    <citation type="journal article" date="2003" name="EMBO J.">
        <title>Three-dimensional structure of the bacterial multidrug transporter EmrE shows it is an asymmetric homodimer.</title>
        <authorList>
            <person name="Ubarretxena-Belandia I."/>
            <person name="Baldwin J.M."/>
            <person name="Schuldiner S."/>
            <person name="Tate C.G."/>
        </authorList>
    </citation>
    <scope>STRUCTURE BY ELECTRON MICROSCOPY (7.5 ANGSTROMS) IN COMPLEX WITH THE DRUG TPP(+)</scope>
    <scope>SUBUNIT</scope>
</reference>
<reference key="34">
    <citation type="journal article" date="2004" name="Proc. Natl. Acad. Sci. U.S.A.">
        <title>Structure of the multidrug resistance efflux transporter EmrE from Escherichia coli.</title>
        <authorList>
            <person name="Ma C."/>
            <person name="Chang G."/>
        </authorList>
    </citation>
    <scope>X-RAY CRYSTALLOGRAPHY (3.8 ANGSTROMS)</scope>
    <scope>RETRACTED PAPER</scope>
</reference>
<reference key="35">
    <citation type="journal article" date="2007" name="Proc. Natl. Acad. Sci. U.S.A.">
        <authorList>
            <person name="Ma C."/>
            <person name="Chang G."/>
        </authorList>
    </citation>
    <scope>ERRATUM OF PUBMED:14970332</scope>
    <scope>RETRACTION NOTICE OF PUBMED:14970332</scope>
</reference>
<reference key="36">
    <citation type="journal article" date="2005" name="Science">
        <title>X-ray structure of the EmrE multidrug transporter in complex with a substrate.</title>
        <authorList>
            <person name="Pornillos O."/>
            <person name="Chen Y.-J."/>
            <person name="Chen A.P."/>
            <person name="Chang G."/>
        </authorList>
    </citation>
    <scope>X-RAY CRYSTALLOGRAPHY (3.7 ANGSTROMS) IN COMPLEX WITH THE DRUG TPP(+)</scope>
    <scope>RETRACTED PAPER</scope>
</reference>
<reference key="37">
    <citation type="journal article" date="2006" name="Science">
        <authorList>
            <person name="Chang G."/>
            <person name="Roth C.B."/>
            <person name="Reyes C.L."/>
            <person name="Pornillos O."/>
            <person name="Chen Y.J."/>
            <person name="Chen A.P."/>
        </authorList>
    </citation>
    <scope>ERRATUM OF PUBMED:16373573</scope>
    <scope>RETRACTION NOTICE OF PUBMED:16373573</scope>
</reference>
<reference evidence="35" key="38">
    <citation type="journal article" date="2006" name="J. Mol. Biol.">
        <title>Quasi-symmetry in the cryo-EM structure of EmrE provides the key to modeling its transmembrane domain.</title>
        <authorList>
            <person name="Fleishman S.J."/>
            <person name="Harrington S.E."/>
            <person name="Enosh A."/>
            <person name="Halperin D."/>
            <person name="Tate C.G."/>
            <person name="Ben-Tal N."/>
        </authorList>
    </citation>
    <scope>STRUCTURE BY ELECTRON MICROSCOPY (7.5 ANGSTROMS)</scope>
    <scope>3D-STRUCTURE MODELING</scope>
    <scope>SUBUNIT</scope>
    <scope>SUBCELLULAR LOCATION</scope>
</reference>
<reference evidence="36 37 38" key="39">
    <citation type="journal article" date="2007" name="Proc. Natl. Acad. Sci. U.S.A.">
        <title>X-ray structure of EmrE supports dual topology model.</title>
        <authorList>
            <person name="Chen Y.J."/>
            <person name="Pornillos O."/>
            <person name="Lieu S."/>
            <person name="Ma C."/>
            <person name="Chen A.P."/>
            <person name="Chang G."/>
        </authorList>
    </citation>
    <scope>X-RAY CRYSTALLOGRAPHY (3.80 ANGSTROMS) OF APOPROTEIN AND IN COMPLEXES WITH TPP</scope>
    <scope>FUNCTION</scope>
    <scope>SUBUNIT</scope>
    <scope>SUBCELLULAR LOCATION</scope>
</reference>
<reference key="40">
    <citation type="journal article" date="2008" name="J. Mol. Biol.">
        <title>Electron crystallography reveals plasticity within the drug binding site of the small multidrug transporter EmrE.</title>
        <authorList>
            <person name="Korkhov V.M."/>
            <person name="Tate C.G."/>
        </authorList>
    </citation>
    <scope>STRUCTURE BY ELECTRON MICROSCOPY</scope>
    <scope>DOMAIN</scope>
</reference>
<dbReference type="EMBL" id="Z11877">
    <property type="protein sequence ID" value="CAA77936.1"/>
    <property type="molecule type" value="Genomic_DNA"/>
</dbReference>
<dbReference type="EMBL" id="M62732">
    <property type="protein sequence ID" value="AAA24190.1"/>
    <property type="molecule type" value="Genomic_DNA"/>
</dbReference>
<dbReference type="EMBL" id="U82598">
    <property type="protein sequence ID" value="AAB40740.1"/>
    <property type="molecule type" value="Genomic_DNA"/>
</dbReference>
<dbReference type="EMBL" id="U00096">
    <property type="protein sequence ID" value="AAC73644.1"/>
    <property type="molecule type" value="Genomic_DNA"/>
</dbReference>
<dbReference type="EMBL" id="AP009048">
    <property type="protein sequence ID" value="BAE76318.1"/>
    <property type="molecule type" value="Genomic_DNA"/>
</dbReference>
<dbReference type="PIR" id="JN0329">
    <property type="entry name" value="JN0329"/>
</dbReference>
<dbReference type="RefSeq" id="NP_415075.1">
    <property type="nucleotide sequence ID" value="NC_000913.3"/>
</dbReference>
<dbReference type="RefSeq" id="WP_001070439.1">
    <property type="nucleotide sequence ID" value="NZ_LN832404.1"/>
</dbReference>
<dbReference type="PDB" id="2I68">
    <property type="method" value="EM"/>
    <property type="chains" value="A/B=1-110"/>
</dbReference>
<dbReference type="PDB" id="3B5D">
    <property type="method" value="X-ray"/>
    <property type="resolution" value="3.80 A"/>
    <property type="chains" value="A/B=1-110"/>
</dbReference>
<dbReference type="PDB" id="3B61">
    <property type="method" value="X-ray"/>
    <property type="resolution" value="4.50 A"/>
    <property type="chains" value="A/B/C/D/E/F/G/H=1-110"/>
</dbReference>
<dbReference type="PDB" id="3B62">
    <property type="method" value="X-ray"/>
    <property type="resolution" value="4.40 A"/>
    <property type="chains" value="A/B/C/D=1-110"/>
</dbReference>
<dbReference type="PDB" id="7JK8">
    <property type="method" value="NMR"/>
    <property type="chains" value="A/B=1-110"/>
</dbReference>
<dbReference type="PDB" id="7MGX">
    <property type="method" value="X-ray"/>
    <property type="resolution" value="3.13 A"/>
    <property type="chains" value="A/B/E/F=1-110"/>
</dbReference>
<dbReference type="PDB" id="7MH6">
    <property type="method" value="X-ray"/>
    <property type="resolution" value="2.85 A"/>
    <property type="chains" value="A/B=1-110"/>
</dbReference>
<dbReference type="PDB" id="7SFQ">
    <property type="method" value="NMR"/>
    <property type="chains" value="A/B=1-110"/>
</dbReference>
<dbReference type="PDB" id="7SSU">
    <property type="method" value="X-ray"/>
    <property type="resolution" value="3.22 A"/>
    <property type="chains" value="A/B=1-110"/>
</dbReference>
<dbReference type="PDB" id="7SV9">
    <property type="method" value="X-ray"/>
    <property type="resolution" value="3.36 A"/>
    <property type="chains" value="A/B=1-110"/>
</dbReference>
<dbReference type="PDB" id="7SVX">
    <property type="method" value="X-ray"/>
    <property type="resolution" value="3.90 A"/>
    <property type="chains" value="A/B=1-110"/>
</dbReference>
<dbReference type="PDB" id="7T00">
    <property type="method" value="X-ray"/>
    <property type="resolution" value="3.91 A"/>
    <property type="chains" value="A/B=1-110"/>
</dbReference>
<dbReference type="PDB" id="8UOZ">
    <property type="method" value="Other"/>
    <property type="chains" value="A/B=1-110"/>
</dbReference>
<dbReference type="PDB" id="8UWU">
    <property type="method" value="Other"/>
    <property type="chains" value="A/B=1-110"/>
</dbReference>
<dbReference type="PDBsum" id="2I68"/>
<dbReference type="PDBsum" id="3B5D"/>
<dbReference type="PDBsum" id="3B61"/>
<dbReference type="PDBsum" id="3B62"/>
<dbReference type="PDBsum" id="7JK8"/>
<dbReference type="PDBsum" id="7MGX"/>
<dbReference type="PDBsum" id="7MH6"/>
<dbReference type="PDBsum" id="7SFQ"/>
<dbReference type="PDBsum" id="7SSU"/>
<dbReference type="PDBsum" id="7SV9"/>
<dbReference type="PDBsum" id="7SVX"/>
<dbReference type="PDBsum" id="7T00"/>
<dbReference type="PDBsum" id="8UOZ"/>
<dbReference type="PDBsum" id="8UWU"/>
<dbReference type="BMRB" id="P23895"/>
<dbReference type="EMDB" id="EMD-1087"/>
<dbReference type="SMR" id="P23895"/>
<dbReference type="BioGRID" id="4259366">
    <property type="interactions" value="101"/>
</dbReference>
<dbReference type="ComplexPortal" id="CPX-2121">
    <property type="entry name" value="EmrE multidrug transporter complex"/>
</dbReference>
<dbReference type="DIP" id="DIP-9505N"/>
<dbReference type="FunCoup" id="P23895">
    <property type="interactions" value="189"/>
</dbReference>
<dbReference type="STRING" id="511145.b0543"/>
<dbReference type="CARD" id="ARO:3004039">
    <property type="molecule name" value="Ecol_emrE"/>
    <property type="mechanism identifier" value="ARO:0010000"/>
    <property type="mechanism name" value="antibiotic efflux"/>
</dbReference>
<dbReference type="TCDB" id="2.A.7.1.3">
    <property type="family name" value="the drug/metabolite transporter (dmt) superfamily"/>
</dbReference>
<dbReference type="PaxDb" id="511145-b0543"/>
<dbReference type="DNASU" id="948442"/>
<dbReference type="EnsemblBacteria" id="AAC73644">
    <property type="protein sequence ID" value="AAC73644"/>
    <property type="gene ID" value="b0543"/>
</dbReference>
<dbReference type="GeneID" id="948442"/>
<dbReference type="KEGG" id="ecj:JW0531"/>
<dbReference type="KEGG" id="eco:b0543"/>
<dbReference type="KEGG" id="ecoc:C3026_02670"/>
<dbReference type="PATRIC" id="fig|1411691.4.peg.1735"/>
<dbReference type="EchoBASE" id="EB0623"/>
<dbReference type="eggNOG" id="COG2076">
    <property type="taxonomic scope" value="Bacteria"/>
</dbReference>
<dbReference type="HOGENOM" id="CLU_133067_0_2_6"/>
<dbReference type="InParanoid" id="P23895"/>
<dbReference type="OMA" id="TYALWSG"/>
<dbReference type="OrthoDB" id="9808638at2"/>
<dbReference type="PhylomeDB" id="P23895"/>
<dbReference type="BioCyc" id="EcoCyc:EMRE-MONOMER"/>
<dbReference type="BioCyc" id="MetaCyc:EMRE-MONOMER"/>
<dbReference type="SABIO-RK" id="P23895"/>
<dbReference type="EvolutionaryTrace" id="P23895"/>
<dbReference type="PRO" id="PR:P23895"/>
<dbReference type="Proteomes" id="UP000000625">
    <property type="component" value="Chromosome"/>
</dbReference>
<dbReference type="GO" id="GO:1990207">
    <property type="term" value="C:EmrE multidrug transporter complex"/>
    <property type="evidence" value="ECO:0000353"/>
    <property type="project" value="ComplexPortal"/>
</dbReference>
<dbReference type="GO" id="GO:0016020">
    <property type="term" value="C:membrane"/>
    <property type="evidence" value="ECO:0000314"/>
    <property type="project" value="EcoliWiki"/>
</dbReference>
<dbReference type="GO" id="GO:0005886">
    <property type="term" value="C:plasma membrane"/>
    <property type="evidence" value="ECO:0000314"/>
    <property type="project" value="EcoCyc"/>
</dbReference>
<dbReference type="GO" id="GO:0015199">
    <property type="term" value="F:amino-acid betaine transmembrane transporter activity"/>
    <property type="evidence" value="ECO:0000315"/>
    <property type="project" value="EcoCyc"/>
</dbReference>
<dbReference type="GO" id="GO:0015297">
    <property type="term" value="F:antiporter activity"/>
    <property type="evidence" value="ECO:0000314"/>
    <property type="project" value="EcoliWiki"/>
</dbReference>
<dbReference type="GO" id="GO:0015220">
    <property type="term" value="F:choline transmembrane transporter activity"/>
    <property type="evidence" value="ECO:0000315"/>
    <property type="project" value="EcoCyc"/>
</dbReference>
<dbReference type="GO" id="GO:0042802">
    <property type="term" value="F:identical protein binding"/>
    <property type="evidence" value="ECO:0000353"/>
    <property type="project" value="IntAct"/>
</dbReference>
<dbReference type="GO" id="GO:0022857">
    <property type="term" value="F:transmembrane transporter activity"/>
    <property type="evidence" value="ECO:0000314"/>
    <property type="project" value="CACAO"/>
</dbReference>
<dbReference type="GO" id="GO:0042910">
    <property type="term" value="F:xenobiotic transmembrane transporter activity"/>
    <property type="evidence" value="ECO:0000314"/>
    <property type="project" value="EcoCyc"/>
</dbReference>
<dbReference type="GO" id="GO:0071466">
    <property type="term" value="P:cellular response to xenobiotic stimulus"/>
    <property type="evidence" value="ECO:0000314"/>
    <property type="project" value="ComplexPortal"/>
</dbReference>
<dbReference type="GO" id="GO:0015871">
    <property type="term" value="P:choline transport"/>
    <property type="evidence" value="ECO:0000315"/>
    <property type="project" value="EcoCyc"/>
</dbReference>
<dbReference type="GO" id="GO:0006974">
    <property type="term" value="P:DNA damage response"/>
    <property type="evidence" value="ECO:0000270"/>
    <property type="project" value="EcoliWiki"/>
</dbReference>
<dbReference type="GO" id="GO:0031460">
    <property type="term" value="P:glycine betaine transport"/>
    <property type="evidence" value="ECO:0000315"/>
    <property type="project" value="EcoCyc"/>
</dbReference>
<dbReference type="GO" id="GO:0006970">
    <property type="term" value="P:response to osmotic stress"/>
    <property type="evidence" value="ECO:0000315"/>
    <property type="project" value="EcoCyc"/>
</dbReference>
<dbReference type="GO" id="GO:0009410">
    <property type="term" value="P:response to xenobiotic stimulus"/>
    <property type="evidence" value="ECO:0000315"/>
    <property type="project" value="EcoliWiki"/>
</dbReference>
<dbReference type="GO" id="GO:0055085">
    <property type="term" value="P:transmembrane transport"/>
    <property type="evidence" value="ECO:0000318"/>
    <property type="project" value="GO_Central"/>
</dbReference>
<dbReference type="GO" id="GO:1990961">
    <property type="term" value="P:xenobiotic detoxification by transmembrane export across the plasma membrane"/>
    <property type="evidence" value="ECO:0000314"/>
    <property type="project" value="ComplexPortal"/>
</dbReference>
<dbReference type="GO" id="GO:0006805">
    <property type="term" value="P:xenobiotic metabolic process"/>
    <property type="evidence" value="ECO:0000315"/>
    <property type="project" value="EcoliWiki"/>
</dbReference>
<dbReference type="GO" id="GO:0042908">
    <property type="term" value="P:xenobiotic transport"/>
    <property type="evidence" value="ECO:0000314"/>
    <property type="project" value="EcoCyc"/>
</dbReference>
<dbReference type="FunFam" id="1.10.3730.20:FF:000001">
    <property type="entry name" value="Quaternary ammonium compound resistance transporter SugE"/>
    <property type="match status" value="1"/>
</dbReference>
<dbReference type="Gene3D" id="1.10.3730.20">
    <property type="match status" value="1"/>
</dbReference>
<dbReference type="InterPro" id="IPR000390">
    <property type="entry name" value="Small_drug/metabolite_transptr"/>
</dbReference>
<dbReference type="InterPro" id="IPR045324">
    <property type="entry name" value="Small_multidrug_res"/>
</dbReference>
<dbReference type="NCBIfam" id="NF007087">
    <property type="entry name" value="PRK09541.1"/>
    <property type="match status" value="1"/>
</dbReference>
<dbReference type="NCBIfam" id="NF042984">
    <property type="entry name" value="SMR_efflux_EmrE"/>
    <property type="match status" value="1"/>
</dbReference>
<dbReference type="PANTHER" id="PTHR30561:SF1">
    <property type="entry name" value="MULTIDRUG TRANSPORTER EMRE"/>
    <property type="match status" value="1"/>
</dbReference>
<dbReference type="PANTHER" id="PTHR30561">
    <property type="entry name" value="SMR FAMILY PROTON-DEPENDENT DRUG EFFLUX TRANSPORTER SUGE"/>
    <property type="match status" value="1"/>
</dbReference>
<dbReference type="Pfam" id="PF00893">
    <property type="entry name" value="Multi_Drug_Res"/>
    <property type="match status" value="1"/>
</dbReference>
<dbReference type="SUPFAM" id="SSF103481">
    <property type="entry name" value="Multidrug resistance efflux transporter EmrE"/>
    <property type="match status" value="1"/>
</dbReference>
<name>EMRE_ECOLI</name>